<feature type="signal peptide" evidence="2">
    <location>
        <begin position="1"/>
        <end position="27"/>
    </location>
</feature>
<feature type="chain" id="PRO_0000252025" description="Putative expansin-B14">
    <location>
        <begin position="28"/>
        <end position="273"/>
    </location>
</feature>
<feature type="domain" description="Expansin-like EG45" evidence="4">
    <location>
        <begin position="56"/>
        <end position="166"/>
    </location>
</feature>
<feature type="domain" description="Expansin-like CBD" evidence="3">
    <location>
        <begin position="179"/>
        <end position="265"/>
    </location>
</feature>
<feature type="glycosylation site" description="N-linked (GlcNAc...) asparagine" evidence="2">
    <location>
        <position position="50"/>
    </location>
</feature>
<feature type="disulfide bond" evidence="4">
    <location>
        <begin position="59"/>
        <end position="88"/>
    </location>
</feature>
<feature type="disulfide bond" evidence="4">
    <location>
        <begin position="91"/>
        <end position="161"/>
    </location>
</feature>
<feature type="disulfide bond" evidence="4">
    <location>
        <begin position="96"/>
        <end position="102"/>
    </location>
</feature>
<feature type="sequence conflict" description="In Ref. 4; AAL24477." evidence="5" ref="4">
    <original>I</original>
    <variation>T</variation>
    <location>
        <position position="266"/>
    </location>
</feature>
<proteinExistence type="inferred from homology"/>
<accession>Q6H677</accession>
<accession>Q0DYY7</accession>
<accession>Q8LLM0</accession>
<accession>Q946J3</accession>
<reference key="1">
    <citation type="journal article" date="2005" name="Nature">
        <title>The map-based sequence of the rice genome.</title>
        <authorList>
            <consortium name="International rice genome sequencing project (IRGSP)"/>
        </authorList>
    </citation>
    <scope>NUCLEOTIDE SEQUENCE [LARGE SCALE GENOMIC DNA]</scope>
    <source>
        <strain>cv. Nipponbare</strain>
    </source>
</reference>
<reference key="2">
    <citation type="journal article" date="2008" name="Nucleic Acids Res.">
        <title>The rice annotation project database (RAP-DB): 2008 update.</title>
        <authorList>
            <consortium name="The rice annotation project (RAP)"/>
        </authorList>
    </citation>
    <scope>GENOME REANNOTATION</scope>
    <source>
        <strain>cv. Nipponbare</strain>
    </source>
</reference>
<reference key="3">
    <citation type="journal article" date="2013" name="Rice">
        <title>Improvement of the Oryza sativa Nipponbare reference genome using next generation sequence and optical map data.</title>
        <authorList>
            <person name="Kawahara Y."/>
            <person name="de la Bastide M."/>
            <person name="Hamilton J.P."/>
            <person name="Kanamori H."/>
            <person name="McCombie W.R."/>
            <person name="Ouyang S."/>
            <person name="Schwartz D.C."/>
            <person name="Tanaka T."/>
            <person name="Wu J."/>
            <person name="Zhou S."/>
            <person name="Childs K.L."/>
            <person name="Davidson R.M."/>
            <person name="Lin H."/>
            <person name="Quesada-Ocampo L."/>
            <person name="Vaillancourt B."/>
            <person name="Sakai H."/>
            <person name="Lee S.S."/>
            <person name="Kim J."/>
            <person name="Numa H."/>
            <person name="Itoh T."/>
            <person name="Buell C.R."/>
            <person name="Matsumoto T."/>
        </authorList>
    </citation>
    <scope>GENOME REANNOTATION</scope>
    <source>
        <strain>cv. Nipponbare</strain>
    </source>
</reference>
<reference key="4">
    <citation type="journal article" date="2001" name="Plant Physiol.">
        <title>Expression of beta-expansins is correlated with internodal elongation in deepwater rice.</title>
        <authorList>
            <person name="Lee Y."/>
            <person name="Kende H."/>
        </authorList>
    </citation>
    <scope>NUCLEOTIDE SEQUENCE [GENOMIC DNA] OF 1-119 AND 159-273</scope>
</reference>
<reference key="5">
    <citation type="journal article" date="2004" name="Plant Mol. Biol.">
        <title>Nomenclature for members of the expansin superfamily of genes and proteins.</title>
        <authorList>
            <person name="Kende H."/>
            <person name="Bradford K.J."/>
            <person name="Brummell D.A."/>
            <person name="Cho H.-T."/>
            <person name="Cosgrove D.J."/>
            <person name="Fleming A.J."/>
            <person name="Gehring C."/>
            <person name="Lee Y."/>
            <person name="McQueen-Mason S.J."/>
            <person name="Rose J.K.C."/>
            <person name="Voesenek L.A.C."/>
        </authorList>
    </citation>
    <scope>NOMENCLATURE</scope>
</reference>
<sequence>MALAAKLLPSIVAFVALACCVLRSSVASVDHHRKLSGWSIGGATWYGPANGSGTDGGACGYQGDVGQPPFNSMIAAGSPSIYESGKGCGSCYQVKCSGNPSCSGKPVTVVLTDLCPGGACLEEPVHFDLSGTAFGAMAKPGQDDQLRNAGKLPVQYARVPCKWQGVDIAFRVDAGSNQYYLAVLVEDEDGDGDLSAVDLMQSGGSGGGGSWAAMQQSWGAVWKYNSGPAPLQAPMSIRLTSGSGRTLVASNVIPAGWQPGGTYRSIVNFRRED</sequence>
<keyword id="KW-0134">Cell wall</keyword>
<keyword id="KW-0961">Cell wall biogenesis/degradation</keyword>
<keyword id="KW-1015">Disulfide bond</keyword>
<keyword id="KW-0325">Glycoprotein</keyword>
<keyword id="KW-0472">Membrane</keyword>
<keyword id="KW-1185">Reference proteome</keyword>
<keyword id="KW-0964">Secreted</keyword>
<keyword id="KW-0732">Signal</keyword>
<comment type="function">
    <text evidence="1">May cause loosening and extension of plant cell walls by disrupting non-covalent bonding between cellulose microfibrils and matrix glucans. No enzymatic activity has been found. May be required for rapid internodal elongation in deepwater rice during submergence (By similarity).</text>
</comment>
<comment type="subcellular location">
    <subcellularLocation>
        <location evidence="1">Secreted</location>
        <location evidence="1">Cell wall</location>
    </subcellularLocation>
    <subcellularLocation>
        <location evidence="1">Membrane</location>
        <topology evidence="1">Peripheral membrane protein</topology>
    </subcellularLocation>
</comment>
<comment type="similarity">
    <text evidence="5">Belongs to the expansin family. Expansin B subfamily.</text>
</comment>
<comment type="online information" name="EXPANSIN homepage">
    <link uri="https://www.dept.psu.edu/biology/groups/expansins/index.htm"/>
</comment>
<gene>
    <name type="primary">EXPB14</name>
    <name type="ordered locus">Os02g0658600</name>
    <name type="ordered locus">LOC_Os02g44106</name>
    <name type="ORF">OJ1112_F09.27</name>
    <name type="ORF">P0708H12.6</name>
</gene>
<evidence type="ECO:0000250" key="1"/>
<evidence type="ECO:0000255" key="2"/>
<evidence type="ECO:0000255" key="3">
    <source>
        <dbReference type="PROSITE-ProRule" id="PRU00078"/>
    </source>
</evidence>
<evidence type="ECO:0000255" key="4">
    <source>
        <dbReference type="PROSITE-ProRule" id="PRU00079"/>
    </source>
</evidence>
<evidence type="ECO:0000305" key="5"/>
<dbReference type="EMBL" id="AP005072">
    <property type="protein sequence ID" value="BAD25735.1"/>
    <property type="molecule type" value="Genomic_DNA"/>
</dbReference>
<dbReference type="EMBL" id="AP005289">
    <property type="protein sequence ID" value="BAD25772.1"/>
    <property type="molecule type" value="Genomic_DNA"/>
</dbReference>
<dbReference type="EMBL" id="AP008208">
    <property type="protein sequence ID" value="BAF09551.1"/>
    <property type="molecule type" value="Genomic_DNA"/>
</dbReference>
<dbReference type="EMBL" id="AP014958">
    <property type="protein sequence ID" value="BAS80123.1"/>
    <property type="molecule type" value="Genomic_DNA"/>
</dbReference>
<dbReference type="EMBL" id="AF391107">
    <property type="protein sequence ID" value="AAL24477.1"/>
    <property type="molecule type" value="Genomic_DNA"/>
</dbReference>
<dbReference type="EMBL" id="AF391109">
    <property type="protein sequence ID" value="AAM73780.1"/>
    <property type="molecule type" value="Genomic_DNA"/>
</dbReference>
<dbReference type="RefSeq" id="XP_015624927.1">
    <property type="nucleotide sequence ID" value="XM_015769441.1"/>
</dbReference>
<dbReference type="SMR" id="Q6H677"/>
<dbReference type="FunCoup" id="Q6H677">
    <property type="interactions" value="6"/>
</dbReference>
<dbReference type="STRING" id="39947.Q6H677"/>
<dbReference type="GlyCosmos" id="Q6H677">
    <property type="glycosylation" value="1 site, No reported glycans"/>
</dbReference>
<dbReference type="PaxDb" id="39947-Q6H677"/>
<dbReference type="EnsemblPlants" id="Os02t0658600-00">
    <property type="protein sequence ID" value="Os02t0658600-00"/>
    <property type="gene ID" value="Os02g0658600"/>
</dbReference>
<dbReference type="Gramene" id="Os02t0658600-00">
    <property type="protein sequence ID" value="Os02t0658600-00"/>
    <property type="gene ID" value="Os02g0658600"/>
</dbReference>
<dbReference type="KEGG" id="dosa:Os02g0658600"/>
<dbReference type="eggNOG" id="ENOG502S9SU">
    <property type="taxonomic scope" value="Eukaryota"/>
</dbReference>
<dbReference type="HOGENOM" id="CLU_027462_1_2_1"/>
<dbReference type="InParanoid" id="Q6H677"/>
<dbReference type="OMA" id="CSWPGMD"/>
<dbReference type="OrthoDB" id="406505at2759"/>
<dbReference type="Proteomes" id="UP000000763">
    <property type="component" value="Chromosome 2"/>
</dbReference>
<dbReference type="Proteomes" id="UP000059680">
    <property type="component" value="Chromosome 2"/>
</dbReference>
<dbReference type="GO" id="GO:0005576">
    <property type="term" value="C:extracellular region"/>
    <property type="evidence" value="ECO:0007669"/>
    <property type="project" value="UniProtKB-KW"/>
</dbReference>
<dbReference type="GO" id="GO:0016020">
    <property type="term" value="C:membrane"/>
    <property type="evidence" value="ECO:0007669"/>
    <property type="project" value="UniProtKB-SubCell"/>
</dbReference>
<dbReference type="GO" id="GO:0009828">
    <property type="term" value="P:plant-type cell wall loosening"/>
    <property type="evidence" value="ECO:0000250"/>
    <property type="project" value="UniProtKB"/>
</dbReference>
<dbReference type="GO" id="GO:0019953">
    <property type="term" value="P:sexual reproduction"/>
    <property type="evidence" value="ECO:0007669"/>
    <property type="project" value="InterPro"/>
</dbReference>
<dbReference type="CDD" id="cd22275">
    <property type="entry name" value="DPBB_EXPB_N"/>
    <property type="match status" value="1"/>
</dbReference>
<dbReference type="Gene3D" id="2.60.40.760">
    <property type="entry name" value="Expansin, cellulose-binding-like domain"/>
    <property type="match status" value="1"/>
</dbReference>
<dbReference type="Gene3D" id="2.40.40.10">
    <property type="entry name" value="RlpA-like domain"/>
    <property type="match status" value="1"/>
</dbReference>
<dbReference type="InterPro" id="IPR007118">
    <property type="entry name" value="Expan_Lol_pI"/>
</dbReference>
<dbReference type="InterPro" id="IPR007112">
    <property type="entry name" value="Expansin/allergen_DPBB_dom"/>
</dbReference>
<dbReference type="InterPro" id="IPR007117">
    <property type="entry name" value="Expansin_CBD"/>
</dbReference>
<dbReference type="InterPro" id="IPR036749">
    <property type="entry name" value="Expansin_CBD_sf"/>
</dbReference>
<dbReference type="InterPro" id="IPR005795">
    <property type="entry name" value="LolPI"/>
</dbReference>
<dbReference type="InterPro" id="IPR009009">
    <property type="entry name" value="RlpA-like_DPBB"/>
</dbReference>
<dbReference type="InterPro" id="IPR036908">
    <property type="entry name" value="RlpA-like_sf"/>
</dbReference>
<dbReference type="PANTHER" id="PTHR31692:SF56">
    <property type="entry name" value="EXPANSIN-B2-RELATED"/>
    <property type="match status" value="1"/>
</dbReference>
<dbReference type="PANTHER" id="PTHR31692">
    <property type="entry name" value="EXPANSIN-B3"/>
    <property type="match status" value="1"/>
</dbReference>
<dbReference type="Pfam" id="PF03330">
    <property type="entry name" value="DPBB_1"/>
    <property type="match status" value="1"/>
</dbReference>
<dbReference type="Pfam" id="PF01357">
    <property type="entry name" value="Expansin_C"/>
    <property type="match status" value="1"/>
</dbReference>
<dbReference type="PRINTS" id="PR01225">
    <property type="entry name" value="EXPANSNFAMLY"/>
</dbReference>
<dbReference type="PRINTS" id="PR00829">
    <property type="entry name" value="LOLP1ALLERGN"/>
</dbReference>
<dbReference type="SMART" id="SM00837">
    <property type="entry name" value="DPBB_1"/>
    <property type="match status" value="1"/>
</dbReference>
<dbReference type="SUPFAM" id="SSF50685">
    <property type="entry name" value="Barwin-like endoglucanases"/>
    <property type="match status" value="1"/>
</dbReference>
<dbReference type="SUPFAM" id="SSF49590">
    <property type="entry name" value="PHL pollen allergen"/>
    <property type="match status" value="1"/>
</dbReference>
<dbReference type="PROSITE" id="PS50843">
    <property type="entry name" value="EXPANSIN_CBD"/>
    <property type="match status" value="1"/>
</dbReference>
<dbReference type="PROSITE" id="PS50842">
    <property type="entry name" value="EXPANSIN_EG45"/>
    <property type="match status" value="1"/>
</dbReference>
<name>EXB14_ORYSJ</name>
<protein>
    <recommendedName>
        <fullName>Putative expansin-B14</fullName>
    </recommendedName>
    <alternativeName>
        <fullName>Beta-expansin-14</fullName>
    </alternativeName>
    <alternativeName>
        <fullName>OsEXPB14</fullName>
    </alternativeName>
    <alternativeName>
        <fullName>OsaEXPb1.18</fullName>
    </alternativeName>
</protein>
<organism>
    <name type="scientific">Oryza sativa subsp. japonica</name>
    <name type="common">Rice</name>
    <dbReference type="NCBI Taxonomy" id="39947"/>
    <lineage>
        <taxon>Eukaryota</taxon>
        <taxon>Viridiplantae</taxon>
        <taxon>Streptophyta</taxon>
        <taxon>Embryophyta</taxon>
        <taxon>Tracheophyta</taxon>
        <taxon>Spermatophyta</taxon>
        <taxon>Magnoliopsida</taxon>
        <taxon>Liliopsida</taxon>
        <taxon>Poales</taxon>
        <taxon>Poaceae</taxon>
        <taxon>BOP clade</taxon>
        <taxon>Oryzoideae</taxon>
        <taxon>Oryzeae</taxon>
        <taxon>Oryzinae</taxon>
        <taxon>Oryza</taxon>
        <taxon>Oryza sativa</taxon>
    </lineage>
</organism>